<name>CX7A1_HUMAN</name>
<feature type="transit peptide" description="Mitochondrion" evidence="5">
    <location>
        <begin position="1"/>
        <end position="21"/>
    </location>
</feature>
<feature type="chain" id="PRO_0000006149" description="Cytochrome c oxidase subunit 7A1, mitochondrial">
    <location>
        <begin position="22"/>
        <end position="79"/>
    </location>
</feature>
<feature type="topological domain" description="Mitochondrial matrix" evidence="1">
    <location>
        <begin position="22"/>
        <end position="46"/>
    </location>
</feature>
<feature type="transmembrane region" description="Helical" evidence="1">
    <location>
        <begin position="47"/>
        <end position="75"/>
    </location>
</feature>
<feature type="topological domain" description="Mitochondrial intermembrane" evidence="1">
    <location>
        <begin position="76"/>
        <end position="79"/>
    </location>
</feature>
<accession>P24310</accession>
<dbReference type="EMBL" id="M83186">
    <property type="protein sequence ID" value="AAA52166.1"/>
    <property type="molecule type" value="mRNA"/>
</dbReference>
<dbReference type="EMBL" id="U81524">
    <property type="protein sequence ID" value="AAB82735.1"/>
    <property type="molecule type" value="Genomic_DNA"/>
</dbReference>
<dbReference type="EMBL" id="AC002984">
    <property type="protein sequence ID" value="AAB81547.1"/>
    <property type="molecule type" value="Genomic_DNA"/>
</dbReference>
<dbReference type="EMBL" id="AF037372">
    <property type="protein sequence ID" value="AAB92616.1"/>
    <property type="molecule type" value="Genomic_DNA"/>
</dbReference>
<dbReference type="EMBL" id="AF127789">
    <property type="protein sequence ID" value="AAF72747.1"/>
    <property type="molecule type" value="Genomic_DNA"/>
</dbReference>
<dbReference type="EMBL" id="AD001527">
    <property type="protein sequence ID" value="AAB51184.1"/>
    <property type="molecule type" value="Genomic_DNA"/>
</dbReference>
<dbReference type="EMBL" id="BC002757">
    <property type="protein sequence ID" value="AAH02757.1"/>
    <property type="molecule type" value="mRNA"/>
</dbReference>
<dbReference type="CCDS" id="CCDS12490.1"/>
<dbReference type="PIR" id="JC1303">
    <property type="entry name" value="OSHU7A"/>
</dbReference>
<dbReference type="RefSeq" id="NP_001855.1">
    <property type="nucleotide sequence ID" value="NM_001864.4"/>
</dbReference>
<dbReference type="SMR" id="P24310"/>
<dbReference type="BioGRID" id="107739">
    <property type="interactions" value="11"/>
</dbReference>
<dbReference type="FunCoup" id="P24310">
    <property type="interactions" value="241"/>
</dbReference>
<dbReference type="IntAct" id="P24310">
    <property type="interactions" value="15"/>
</dbReference>
<dbReference type="STRING" id="9606.ENSP00000292907"/>
<dbReference type="DrugBank" id="DB02659">
    <property type="generic name" value="Cholic Acid"/>
</dbReference>
<dbReference type="DrugBank" id="DB04464">
    <property type="generic name" value="N-Formylmethionine"/>
</dbReference>
<dbReference type="TCDB" id="3.D.4.11.1">
    <property type="family name" value="the proton-translocating cytochrome oxidase (cox) superfamily"/>
</dbReference>
<dbReference type="iPTMnet" id="P24310"/>
<dbReference type="PhosphoSitePlus" id="P24310"/>
<dbReference type="SwissPalm" id="P24310"/>
<dbReference type="BioMuta" id="COX7A1"/>
<dbReference type="jPOST" id="P24310"/>
<dbReference type="MassIVE" id="P24310"/>
<dbReference type="PaxDb" id="9606-ENSP00000292907"/>
<dbReference type="PeptideAtlas" id="P24310"/>
<dbReference type="ProteomicsDB" id="54195"/>
<dbReference type="Antibodypedia" id="44654">
    <property type="antibodies" value="98 antibodies from 22 providers"/>
</dbReference>
<dbReference type="DNASU" id="1346"/>
<dbReference type="Ensembl" id="ENST00000292907.8">
    <property type="protein sequence ID" value="ENSP00000292907.3"/>
    <property type="gene ID" value="ENSG00000161281.11"/>
</dbReference>
<dbReference type="GeneID" id="1346"/>
<dbReference type="KEGG" id="hsa:1346"/>
<dbReference type="MANE-Select" id="ENST00000292907.8">
    <property type="protein sequence ID" value="ENSP00000292907.3"/>
    <property type="RefSeq nucleotide sequence ID" value="NM_001864.4"/>
    <property type="RefSeq protein sequence ID" value="NP_001855.1"/>
</dbReference>
<dbReference type="AGR" id="HGNC:2287"/>
<dbReference type="CTD" id="1346"/>
<dbReference type="DisGeNET" id="1346"/>
<dbReference type="GeneCards" id="COX7A1"/>
<dbReference type="HGNC" id="HGNC:2287">
    <property type="gene designation" value="COX7A1"/>
</dbReference>
<dbReference type="HPA" id="ENSG00000161281">
    <property type="expression patterns" value="Group enriched (heart muscle, skeletal muscle, tongue)"/>
</dbReference>
<dbReference type="MalaCards" id="COX7A1"/>
<dbReference type="MIM" id="123995">
    <property type="type" value="gene"/>
</dbReference>
<dbReference type="neXtProt" id="NX_P24310"/>
<dbReference type="OpenTargets" id="ENSG00000161281"/>
<dbReference type="PharmGKB" id="PA26805"/>
<dbReference type="VEuPathDB" id="HostDB:ENSG00000161281"/>
<dbReference type="eggNOG" id="ENOG502SBK9">
    <property type="taxonomic scope" value="Eukaryota"/>
</dbReference>
<dbReference type="GeneTree" id="ENSGT00940000162305"/>
<dbReference type="HOGENOM" id="CLU_173437_1_0_1"/>
<dbReference type="InParanoid" id="P24310"/>
<dbReference type="OMA" id="VYCLGWA"/>
<dbReference type="OrthoDB" id="5966508at2759"/>
<dbReference type="PAN-GO" id="P24310">
    <property type="GO annotations" value="3 GO annotations based on evolutionary models"/>
</dbReference>
<dbReference type="PhylomeDB" id="P24310"/>
<dbReference type="TreeFam" id="TF105067"/>
<dbReference type="PathwayCommons" id="P24310"/>
<dbReference type="Reactome" id="R-HSA-5628897">
    <property type="pathway name" value="TP53 Regulates Metabolic Genes"/>
</dbReference>
<dbReference type="Reactome" id="R-HSA-611105">
    <property type="pathway name" value="Respiratory electron transport"/>
</dbReference>
<dbReference type="Reactome" id="R-HSA-9707564">
    <property type="pathway name" value="Cytoprotection by HMOX1"/>
</dbReference>
<dbReference type="Reactome" id="R-HSA-9844594">
    <property type="pathway name" value="Transcriptional regulation of brown and beige adipocyte differentiation by EBF2"/>
</dbReference>
<dbReference type="Reactome" id="R-HSA-9864848">
    <property type="pathway name" value="Complex IV assembly"/>
</dbReference>
<dbReference type="SignaLink" id="P24310"/>
<dbReference type="UniPathway" id="UPA00705"/>
<dbReference type="BioGRID-ORCS" id="1346">
    <property type="hits" value="16 hits in 1158 CRISPR screens"/>
</dbReference>
<dbReference type="ChiTaRS" id="COX7A1">
    <property type="organism name" value="human"/>
</dbReference>
<dbReference type="GeneWiki" id="COX7A1"/>
<dbReference type="GenomeRNAi" id="1346"/>
<dbReference type="Pharos" id="P24310">
    <property type="development level" value="Tbio"/>
</dbReference>
<dbReference type="PRO" id="PR:P24310"/>
<dbReference type="Proteomes" id="UP000005640">
    <property type="component" value="Chromosome 19"/>
</dbReference>
<dbReference type="RNAct" id="P24310">
    <property type="molecule type" value="protein"/>
</dbReference>
<dbReference type="Bgee" id="ENSG00000161281">
    <property type="expression patterns" value="Expressed in heart right ventricle and 196 other cell types or tissues"/>
</dbReference>
<dbReference type="ExpressionAtlas" id="P24310">
    <property type="expression patterns" value="baseline and differential"/>
</dbReference>
<dbReference type="GO" id="GO:0005743">
    <property type="term" value="C:mitochondrial inner membrane"/>
    <property type="evidence" value="ECO:0000304"/>
    <property type="project" value="Reactome"/>
</dbReference>
<dbReference type="GO" id="GO:0005739">
    <property type="term" value="C:mitochondrion"/>
    <property type="evidence" value="ECO:0006056"/>
    <property type="project" value="FlyBase"/>
</dbReference>
<dbReference type="GO" id="GO:0098803">
    <property type="term" value="C:respiratory chain complex"/>
    <property type="evidence" value="ECO:0000318"/>
    <property type="project" value="GO_Central"/>
</dbReference>
<dbReference type="GO" id="GO:0045277">
    <property type="term" value="C:respiratory chain complex IV"/>
    <property type="evidence" value="ECO:0007669"/>
    <property type="project" value="Ensembl"/>
</dbReference>
<dbReference type="GO" id="GO:0004129">
    <property type="term" value="F:cytochrome-c oxidase activity"/>
    <property type="evidence" value="ECO:0000304"/>
    <property type="project" value="ProtInc"/>
</dbReference>
<dbReference type="GO" id="GO:0006091">
    <property type="term" value="P:generation of precursor metabolites and energy"/>
    <property type="evidence" value="ECO:0000304"/>
    <property type="project" value="ProtInc"/>
</dbReference>
<dbReference type="GO" id="GO:0006123">
    <property type="term" value="P:mitochondrial electron transport, cytochrome c to oxygen"/>
    <property type="evidence" value="ECO:0007669"/>
    <property type="project" value="InterPro"/>
</dbReference>
<dbReference type="GO" id="GO:0097250">
    <property type="term" value="P:mitochondrial respirasome assembly"/>
    <property type="evidence" value="ECO:0000250"/>
    <property type="project" value="UniProtKB"/>
</dbReference>
<dbReference type="CDD" id="cd00928">
    <property type="entry name" value="Cyt_c_Oxidase_VIIa"/>
    <property type="match status" value="1"/>
</dbReference>
<dbReference type="FunFam" id="4.10.91.10:FF:000001">
    <property type="entry name" value="Cytochrome c oxidase subunit 7A1, mitochondrial"/>
    <property type="match status" value="1"/>
</dbReference>
<dbReference type="Gene3D" id="4.10.91.10">
    <property type="entry name" value="Cytochrome c oxidase, subunit VIIa"/>
    <property type="match status" value="1"/>
</dbReference>
<dbReference type="InterPro" id="IPR039297">
    <property type="entry name" value="COX7a"/>
</dbReference>
<dbReference type="InterPro" id="IPR036539">
    <property type="entry name" value="Cyt_c_oxidase_su7a_sf"/>
</dbReference>
<dbReference type="InterPro" id="IPR003177">
    <property type="entry name" value="Cytc_oxidase_su7a_met"/>
</dbReference>
<dbReference type="PANTHER" id="PTHR10510">
    <property type="entry name" value="CYTOCHROME C OXIDASE POLYPEPTIDE 7A"/>
    <property type="match status" value="1"/>
</dbReference>
<dbReference type="PANTHER" id="PTHR10510:SF5">
    <property type="entry name" value="CYTOCHROME C OXIDASE SUBUNIT 7A1, MITOCHONDRIAL"/>
    <property type="match status" value="1"/>
</dbReference>
<dbReference type="Pfam" id="PF02238">
    <property type="entry name" value="COX7a"/>
    <property type="match status" value="1"/>
</dbReference>
<dbReference type="SUPFAM" id="SSF81419">
    <property type="entry name" value="Mitochondrial cytochrome c oxidase subunit VIIa"/>
    <property type="match status" value="1"/>
</dbReference>
<protein>
    <recommendedName>
        <fullName>Cytochrome c oxidase subunit 7A1, mitochondrial</fullName>
    </recommendedName>
    <alternativeName>
        <fullName>Cytochrome c oxidase subunit VIIa-heart</fullName>
        <shortName>Cytochrome c oxidase subunit VIIa-H</shortName>
    </alternativeName>
    <alternativeName>
        <fullName>Cytochrome c oxidase subunit VIIa-muscle</fullName>
        <shortName>Cytochrome c oxidase subunit VIIa-M</shortName>
    </alternativeName>
</protein>
<comment type="function">
    <text evidence="2 3 4">Component of the mitochondrial respiratory complex IV (CIV, also named cytochrome c oxidase complex), the last enzyme in the mitochondrial electron transport chain which drives oxidative phosphorylation (By similarity). The CIV complex is the component of the respiratory chain that catalyzes the reduction of oxygen to water (By similarity). Acts as an assembly factor that specifically drives the homodimerization of CIV complexes, mediating the formation of mitochondrial respiratory supercomplexes (respirasomes) containing two CIV: supercomplxes with two molecules of CIV show improved activity (By similarity). Despite being highly expressed in brown adipose tissue, not required for thermogenesis (By similarity).</text>
</comment>
<comment type="pathway">
    <text evidence="3">Energy metabolism; oxidative phosphorylation.</text>
</comment>
<comment type="subunit">
    <text evidence="1">Component of the complex IV (CIV, cytochrome c oxidase), a multisubunit enzyme composed of 14 subunits. The complex is composed of a catalytic core of 3 subunits MT-CO1, MT-CO2 and MT-CO3, encoded in the mitochondrial DNA, and 11 supernumerary subunits COX4I1 (or COX4I2), COX5A, COX5B, COX6A2 (or COX6A1), COX6B1 (or COX6B2), COX6C, COX7A1 (or COX7A2), COX7B, COX7C, COX8B and NDUFA4, which are encoded in the nuclear genome. The complex exists as a monomer or a dimer and forms supercomplexes (SCs) in the inner mitochondrial membrane with NADH-ubiquinone oxidoreductase (complex I, CI) and ubiquinol-cytochrome c oxidoreductase (cytochrome b-c1 complex, complex III, CIII), resulting in different assemblies (supercomplex SCI(1)III(2)IV(1) and megacomplex MCI(2)III(2)IV(2)).</text>
</comment>
<comment type="interaction">
    <interactant intactId="EBI-25876196">
        <id>P24310</id>
    </interactant>
    <interactant intactId="EBI-12593112">
        <id>O75190-2</id>
        <label>DNAJB6</label>
    </interactant>
    <organismsDiffer>false</organismsDiffer>
    <experiments>3</experiments>
</comment>
<comment type="interaction">
    <interactant intactId="EBI-25876196">
        <id>P24310</id>
    </interactant>
    <interactant intactId="EBI-948266">
        <id>O14901</id>
        <label>KLF11</label>
    </interactant>
    <organismsDiffer>false</organismsDiffer>
    <experiments>3</experiments>
</comment>
<comment type="interaction">
    <interactant intactId="EBI-25876196">
        <id>P24310</id>
    </interactant>
    <interactant intactId="EBI-6190702">
        <id>P28331-2</id>
        <label>NDUFS1</label>
    </interactant>
    <organismsDiffer>false</organismsDiffer>
    <experiments>3</experiments>
</comment>
<comment type="interaction">
    <interactant intactId="EBI-25876196">
        <id>P24310</id>
    </interactant>
    <interactant intactId="EBI-2811583">
        <id>Q9BVL2</id>
        <label>NUP58</label>
    </interactant>
    <organismsDiffer>false</organismsDiffer>
    <experiments>3</experiments>
</comment>
<comment type="subcellular location">
    <subcellularLocation>
        <location evidence="1">Mitochondrion inner membrane</location>
        <topology evidence="1">Single-pass membrane protein</topology>
    </subcellularLocation>
</comment>
<comment type="similarity">
    <text evidence="6">Belongs to the cytochrome c oxidase VIIa family.</text>
</comment>
<keyword id="KW-0903">Direct protein sequencing</keyword>
<keyword id="KW-0472">Membrane</keyword>
<keyword id="KW-0496">Mitochondrion</keyword>
<keyword id="KW-0999">Mitochondrion inner membrane</keyword>
<keyword id="KW-0560">Oxidoreductase</keyword>
<keyword id="KW-1267">Proteomics identification</keyword>
<keyword id="KW-1185">Reference proteome</keyword>
<keyword id="KW-0809">Transit peptide</keyword>
<keyword id="KW-0812">Transmembrane</keyword>
<keyword id="KW-1133">Transmembrane helix</keyword>
<gene>
    <name type="primary">COX7A1</name>
    <name type="synonym">COX7AH</name>
</gene>
<proteinExistence type="evidence at protein level"/>
<evidence type="ECO:0000250" key="1">
    <source>
        <dbReference type="UniProtKB" id="P07470"/>
    </source>
</evidence>
<evidence type="ECO:0000250" key="2">
    <source>
        <dbReference type="UniProtKB" id="P10174"/>
    </source>
</evidence>
<evidence type="ECO:0000250" key="3">
    <source>
        <dbReference type="UniProtKB" id="P56392"/>
    </source>
</evidence>
<evidence type="ECO:0000250" key="4">
    <source>
        <dbReference type="UniProtKB" id="Q08CE7"/>
    </source>
</evidence>
<evidence type="ECO:0000269" key="5">
    <source>
    </source>
</evidence>
<evidence type="ECO:0000305" key="6"/>
<reference key="1">
    <citation type="journal article" date="1992" name="Gene">
        <title>Tissue-specific expression and chromosome assignment of genes specifying two isoforms of subunit VIIa of human cytochrome c oxidase.</title>
        <authorList>
            <person name="Arnaudo E."/>
            <person name="Hirano M."/>
            <person name="Seelan R.S."/>
            <person name="Milatovich A."/>
            <person name="Hsieh C.L."/>
            <person name="Fabrizi G.M."/>
            <person name="Grossman L.I."/>
            <person name="Francke U."/>
            <person name="Schon E.A."/>
        </authorList>
    </citation>
    <scope>NUCLEOTIDE SEQUENCE [MRNA]</scope>
</reference>
<reference key="2">
    <citation type="journal article" date="1997" name="Genomics">
        <title>Genomic sequence and organization of the human gene for cytochrome c oxidase subunit (COX7A1) VIIa-M.</title>
        <authorList>
            <person name="Wolz W."/>
            <person name="Kress W."/>
            <person name="Mueller C.R."/>
        </authorList>
    </citation>
    <scope>NUCLEOTIDE SEQUENCE [GENOMIC DNA]</scope>
</reference>
<reference key="3">
    <citation type="journal article" date="2002" name="Biochim. Biophys. Acta">
        <title>Genomic organization and promoter regulation of human cytochrome c oxidase subunit VII heart/muscle isoform (COX7AH).</title>
        <authorList>
            <person name="Yu M."/>
            <person name="Jaradat S.A."/>
            <person name="Grossman L.I."/>
        </authorList>
    </citation>
    <scope>NUCLEOTIDE SEQUENCE [GENOMIC DNA]</scope>
    <source>
        <tissue>Heart</tissue>
    </source>
</reference>
<reference key="4">
    <citation type="journal article" date="1999" name="Mol. Biol. Evol.">
        <title>Molecular evolution of the COX7A gene family in primates.</title>
        <authorList>
            <person name="Schmidt T.R."/>
            <person name="Goodman M."/>
            <person name="Grossman L.I."/>
        </authorList>
    </citation>
    <scope>NUCLEOTIDE SEQUENCE [GENOMIC DNA]</scope>
</reference>
<reference key="5">
    <citation type="journal article" date="2004" name="Nature">
        <title>The DNA sequence and biology of human chromosome 19.</title>
        <authorList>
            <person name="Grimwood J."/>
            <person name="Gordon L.A."/>
            <person name="Olsen A.S."/>
            <person name="Terry A."/>
            <person name="Schmutz J."/>
            <person name="Lamerdin J.E."/>
            <person name="Hellsten U."/>
            <person name="Goodstein D."/>
            <person name="Couronne O."/>
            <person name="Tran-Gyamfi M."/>
            <person name="Aerts A."/>
            <person name="Altherr M."/>
            <person name="Ashworth L."/>
            <person name="Bajorek E."/>
            <person name="Black S."/>
            <person name="Branscomb E."/>
            <person name="Caenepeel S."/>
            <person name="Carrano A.V."/>
            <person name="Caoile C."/>
            <person name="Chan Y.M."/>
            <person name="Christensen M."/>
            <person name="Cleland C.A."/>
            <person name="Copeland A."/>
            <person name="Dalin E."/>
            <person name="Dehal P."/>
            <person name="Denys M."/>
            <person name="Detter J.C."/>
            <person name="Escobar J."/>
            <person name="Flowers D."/>
            <person name="Fotopulos D."/>
            <person name="Garcia C."/>
            <person name="Georgescu A.M."/>
            <person name="Glavina T."/>
            <person name="Gomez M."/>
            <person name="Gonzales E."/>
            <person name="Groza M."/>
            <person name="Hammon N."/>
            <person name="Hawkins T."/>
            <person name="Haydu L."/>
            <person name="Ho I."/>
            <person name="Huang W."/>
            <person name="Israni S."/>
            <person name="Jett J."/>
            <person name="Kadner K."/>
            <person name="Kimball H."/>
            <person name="Kobayashi A."/>
            <person name="Larionov V."/>
            <person name="Leem S.-H."/>
            <person name="Lopez F."/>
            <person name="Lou Y."/>
            <person name="Lowry S."/>
            <person name="Malfatti S."/>
            <person name="Martinez D."/>
            <person name="McCready P.M."/>
            <person name="Medina C."/>
            <person name="Morgan J."/>
            <person name="Nelson K."/>
            <person name="Nolan M."/>
            <person name="Ovcharenko I."/>
            <person name="Pitluck S."/>
            <person name="Pollard M."/>
            <person name="Popkie A.P."/>
            <person name="Predki P."/>
            <person name="Quan G."/>
            <person name="Ramirez L."/>
            <person name="Rash S."/>
            <person name="Retterer J."/>
            <person name="Rodriguez A."/>
            <person name="Rogers S."/>
            <person name="Salamov A."/>
            <person name="Salazar A."/>
            <person name="She X."/>
            <person name="Smith D."/>
            <person name="Slezak T."/>
            <person name="Solovyev V."/>
            <person name="Thayer N."/>
            <person name="Tice H."/>
            <person name="Tsai M."/>
            <person name="Ustaszewska A."/>
            <person name="Vo N."/>
            <person name="Wagner M."/>
            <person name="Wheeler J."/>
            <person name="Wu K."/>
            <person name="Xie G."/>
            <person name="Yang J."/>
            <person name="Dubchak I."/>
            <person name="Furey T.S."/>
            <person name="DeJong P."/>
            <person name="Dickson M."/>
            <person name="Gordon D."/>
            <person name="Eichler E.E."/>
            <person name="Pennacchio L.A."/>
            <person name="Richardson P."/>
            <person name="Stubbs L."/>
            <person name="Rokhsar D.S."/>
            <person name="Myers R.M."/>
            <person name="Rubin E.M."/>
            <person name="Lucas S.M."/>
        </authorList>
    </citation>
    <scope>NUCLEOTIDE SEQUENCE [LARGE SCALE GENOMIC DNA]</scope>
</reference>
<reference key="6">
    <citation type="journal article" date="2004" name="Genome Res.">
        <title>The status, quality, and expansion of the NIH full-length cDNA project: the Mammalian Gene Collection (MGC).</title>
        <authorList>
            <consortium name="The MGC Project Team"/>
        </authorList>
    </citation>
    <scope>NUCLEOTIDE SEQUENCE [LARGE SCALE MRNA]</scope>
    <source>
        <tissue>Uterus</tissue>
    </source>
</reference>
<reference key="7">
    <citation type="journal article" date="1992" name="Eur. J. Biochem.">
        <title>Subunits VIIa,b,c of human cytochrome c oxidase. Identification of both 'heart-type' and 'liver-type' isoforms of subunit VIIa in human heart.</title>
        <authorList>
            <person name="van Kuilenburg A.B.P."/>
            <person name="van Beeumen J.J."/>
            <person name="van der Meer N.M."/>
            <person name="Muijsers A.O."/>
        </authorList>
    </citation>
    <scope>PROTEIN SEQUENCE OF 22-51</scope>
    <source>
        <tissue>Heart</tissue>
        <tissue>Skeletal muscle</tissue>
    </source>
</reference>
<organism>
    <name type="scientific">Homo sapiens</name>
    <name type="common">Human</name>
    <dbReference type="NCBI Taxonomy" id="9606"/>
    <lineage>
        <taxon>Eukaryota</taxon>
        <taxon>Metazoa</taxon>
        <taxon>Chordata</taxon>
        <taxon>Craniata</taxon>
        <taxon>Vertebrata</taxon>
        <taxon>Euteleostomi</taxon>
        <taxon>Mammalia</taxon>
        <taxon>Eutheria</taxon>
        <taxon>Euarchontoglires</taxon>
        <taxon>Primates</taxon>
        <taxon>Haplorrhini</taxon>
        <taxon>Catarrhini</taxon>
        <taxon>Hominidae</taxon>
        <taxon>Homo</taxon>
    </lineage>
</organism>
<sequence length="79" mass="9118">MQALRVSQALIRSFSSTARNRFQNRVREKQKLFQEDNDIPLYLKGGIVDNILYRVTMTLCLGGTVYSLYSLGWASFPRN</sequence>